<evidence type="ECO:0000255" key="1">
    <source>
        <dbReference type="HAMAP-Rule" id="MF_00569"/>
    </source>
</evidence>
<keyword id="KW-0004">4Fe-4S</keyword>
<keyword id="KW-0963">Cytoplasm</keyword>
<keyword id="KW-0408">Iron</keyword>
<keyword id="KW-0411">Iron-sulfur</keyword>
<keyword id="KW-0479">Metal-binding</keyword>
<keyword id="KW-0662">Pyridine nucleotide biosynthesis</keyword>
<keyword id="KW-0808">Transferase</keyword>
<comment type="function">
    <text evidence="1">Catalyzes the condensation of iminoaspartate with dihydroxyacetone phosphate to form quinolinate.</text>
</comment>
<comment type="catalytic activity">
    <reaction evidence="1">
        <text>iminosuccinate + dihydroxyacetone phosphate = quinolinate + phosphate + 2 H2O + H(+)</text>
        <dbReference type="Rhea" id="RHEA:25888"/>
        <dbReference type="ChEBI" id="CHEBI:15377"/>
        <dbReference type="ChEBI" id="CHEBI:15378"/>
        <dbReference type="ChEBI" id="CHEBI:29959"/>
        <dbReference type="ChEBI" id="CHEBI:43474"/>
        <dbReference type="ChEBI" id="CHEBI:57642"/>
        <dbReference type="ChEBI" id="CHEBI:77875"/>
        <dbReference type="EC" id="2.5.1.72"/>
    </reaction>
    <physiologicalReaction direction="left-to-right" evidence="1">
        <dbReference type="Rhea" id="RHEA:25889"/>
    </physiologicalReaction>
</comment>
<comment type="cofactor">
    <cofactor evidence="1">
        <name>[4Fe-4S] cluster</name>
        <dbReference type="ChEBI" id="CHEBI:49883"/>
    </cofactor>
    <text evidence="1">Binds 1 [4Fe-4S] cluster per subunit.</text>
</comment>
<comment type="pathway">
    <text evidence="1">Cofactor biosynthesis; NAD(+) biosynthesis; quinolinate from iminoaspartate: step 1/1.</text>
</comment>
<comment type="subcellular location">
    <subcellularLocation>
        <location evidence="1">Cytoplasm</location>
    </subcellularLocation>
</comment>
<comment type="similarity">
    <text evidence="1">Belongs to the quinolinate synthase family. Type 3 subfamily.</text>
</comment>
<feature type="chain" id="PRO_1000129453" description="Quinolinate synthase">
    <location>
        <begin position="1"/>
        <end position="368"/>
    </location>
</feature>
<feature type="binding site" evidence="1">
    <location>
        <position position="46"/>
    </location>
    <ligand>
        <name>iminosuccinate</name>
        <dbReference type="ChEBI" id="CHEBI:77875"/>
    </ligand>
</feature>
<feature type="binding site" evidence="1">
    <location>
        <position position="63"/>
    </location>
    <ligand>
        <name>iminosuccinate</name>
        <dbReference type="ChEBI" id="CHEBI:77875"/>
    </ligand>
</feature>
<feature type="binding site" evidence="1">
    <location>
        <position position="110"/>
    </location>
    <ligand>
        <name>[4Fe-4S] cluster</name>
        <dbReference type="ChEBI" id="CHEBI:49883"/>
    </ligand>
</feature>
<feature type="binding site" evidence="1">
    <location>
        <begin position="141"/>
        <end position="143"/>
    </location>
    <ligand>
        <name>iminosuccinate</name>
        <dbReference type="ChEBI" id="CHEBI:77875"/>
    </ligand>
</feature>
<feature type="binding site" evidence="1">
    <location>
        <position position="162"/>
    </location>
    <ligand>
        <name>iminosuccinate</name>
        <dbReference type="ChEBI" id="CHEBI:77875"/>
    </ligand>
</feature>
<feature type="binding site" evidence="1">
    <location>
        <position position="230"/>
    </location>
    <ligand>
        <name>[4Fe-4S] cluster</name>
        <dbReference type="ChEBI" id="CHEBI:49883"/>
    </ligand>
</feature>
<feature type="binding site" evidence="1">
    <location>
        <begin position="256"/>
        <end position="258"/>
    </location>
    <ligand>
        <name>iminosuccinate</name>
        <dbReference type="ChEBI" id="CHEBI:77875"/>
    </ligand>
</feature>
<feature type="binding site" evidence="1">
    <location>
        <position position="273"/>
    </location>
    <ligand>
        <name>iminosuccinate</name>
        <dbReference type="ChEBI" id="CHEBI:77875"/>
    </ligand>
</feature>
<feature type="binding site" evidence="1">
    <location>
        <position position="320"/>
    </location>
    <ligand>
        <name>[4Fe-4S] cluster</name>
        <dbReference type="ChEBI" id="CHEBI:49883"/>
    </ligand>
</feature>
<proteinExistence type="inferred from homology"/>
<organism>
    <name type="scientific">Bacillus cereus (strain B4264)</name>
    <dbReference type="NCBI Taxonomy" id="405532"/>
    <lineage>
        <taxon>Bacteria</taxon>
        <taxon>Bacillati</taxon>
        <taxon>Bacillota</taxon>
        <taxon>Bacilli</taxon>
        <taxon>Bacillales</taxon>
        <taxon>Bacillaceae</taxon>
        <taxon>Bacillus</taxon>
        <taxon>Bacillus cereus group</taxon>
    </lineage>
</organism>
<gene>
    <name evidence="1" type="primary">nadA</name>
    <name type="ordered locus">BCB4264_A4546</name>
</gene>
<sequence>MSILEQVQPIETMLPERYYTMSTEDMEKRVREIKEKMGKMLFIPGHHYQKDEVVQFSDAAGDSLQLAQVAASNKDAKYIVFCGVHFMAETADMLTTDDQVVILPDMRAGCSMADMADIEQTERAWKELTKLFGDTMIPLTYVNSTAAIKAFCGRNGGATVTSSNAKQMVSWAFTQKERLVFLPDQHLGRNTAYDLGIPLDKMAVWDPHTDSLEYDGDIEEIQVILWKGHCSVHQNFTVKNIESIRKNHPDMNIIVHPECCYEVVAASDYAGSTKYIIDMIESAPSGSKWAIGTEMNLVNRIIQQHPDKEIVSLNPFMCPCLTMNRIDLPHLLWALETIERGEEINVISVDKQVTTEAVFALNRMLERV</sequence>
<accession>B7HE61</accession>
<name>NADA_BACC4</name>
<dbReference type="EC" id="2.5.1.72" evidence="1"/>
<dbReference type="EMBL" id="CP001176">
    <property type="protein sequence ID" value="ACK62380.1"/>
    <property type="molecule type" value="Genomic_DNA"/>
</dbReference>
<dbReference type="RefSeq" id="WP_000025338.1">
    <property type="nucleotide sequence ID" value="NC_011725.1"/>
</dbReference>
<dbReference type="SMR" id="B7HE61"/>
<dbReference type="KEGG" id="bcb:BCB4264_A4546"/>
<dbReference type="HOGENOM" id="CLU_047382_2_0_9"/>
<dbReference type="UniPathway" id="UPA00253">
    <property type="reaction ID" value="UER00327"/>
</dbReference>
<dbReference type="Proteomes" id="UP000007096">
    <property type="component" value="Chromosome"/>
</dbReference>
<dbReference type="GO" id="GO:0005829">
    <property type="term" value="C:cytosol"/>
    <property type="evidence" value="ECO:0007669"/>
    <property type="project" value="TreeGrafter"/>
</dbReference>
<dbReference type="GO" id="GO:0051539">
    <property type="term" value="F:4 iron, 4 sulfur cluster binding"/>
    <property type="evidence" value="ECO:0007669"/>
    <property type="project" value="UniProtKB-KW"/>
</dbReference>
<dbReference type="GO" id="GO:0046872">
    <property type="term" value="F:metal ion binding"/>
    <property type="evidence" value="ECO:0007669"/>
    <property type="project" value="UniProtKB-KW"/>
</dbReference>
<dbReference type="GO" id="GO:0008987">
    <property type="term" value="F:quinolinate synthetase A activity"/>
    <property type="evidence" value="ECO:0007669"/>
    <property type="project" value="UniProtKB-UniRule"/>
</dbReference>
<dbReference type="GO" id="GO:0034628">
    <property type="term" value="P:'de novo' NAD biosynthetic process from L-aspartate"/>
    <property type="evidence" value="ECO:0007669"/>
    <property type="project" value="TreeGrafter"/>
</dbReference>
<dbReference type="FunFam" id="3.40.50.10800:FF:000001">
    <property type="entry name" value="Quinolinate synthase A"/>
    <property type="match status" value="1"/>
</dbReference>
<dbReference type="Gene3D" id="3.40.50.10800">
    <property type="entry name" value="NadA-like"/>
    <property type="match status" value="3"/>
</dbReference>
<dbReference type="HAMAP" id="MF_00569">
    <property type="entry name" value="NadA_type3"/>
    <property type="match status" value="1"/>
</dbReference>
<dbReference type="InterPro" id="IPR003473">
    <property type="entry name" value="NadA"/>
</dbReference>
<dbReference type="InterPro" id="IPR036094">
    <property type="entry name" value="NadA_sf"/>
</dbReference>
<dbReference type="InterPro" id="IPR023515">
    <property type="entry name" value="Quinolinate_synth_A_type3"/>
</dbReference>
<dbReference type="NCBIfam" id="TIGR00550">
    <property type="entry name" value="nadA"/>
    <property type="match status" value="1"/>
</dbReference>
<dbReference type="NCBIfam" id="NF006880">
    <property type="entry name" value="PRK09375.2-1"/>
    <property type="match status" value="1"/>
</dbReference>
<dbReference type="NCBIfam" id="NF006883">
    <property type="entry name" value="PRK09375.2-4"/>
    <property type="match status" value="1"/>
</dbReference>
<dbReference type="PANTHER" id="PTHR30573:SF0">
    <property type="entry name" value="QUINOLINATE SYNTHASE, CHLOROPLASTIC"/>
    <property type="match status" value="1"/>
</dbReference>
<dbReference type="PANTHER" id="PTHR30573">
    <property type="entry name" value="QUINOLINATE SYNTHETASE A"/>
    <property type="match status" value="1"/>
</dbReference>
<dbReference type="Pfam" id="PF02445">
    <property type="entry name" value="NadA"/>
    <property type="match status" value="1"/>
</dbReference>
<dbReference type="SUPFAM" id="SSF142754">
    <property type="entry name" value="NadA-like"/>
    <property type="match status" value="1"/>
</dbReference>
<reference key="1">
    <citation type="submission" date="2008-10" db="EMBL/GenBank/DDBJ databases">
        <title>Genome sequence of Bacillus cereus B4264.</title>
        <authorList>
            <person name="Dodson R.J."/>
            <person name="Durkin A.S."/>
            <person name="Rosovitz M.J."/>
            <person name="Rasko D.A."/>
            <person name="Hoffmaster A."/>
            <person name="Ravel J."/>
            <person name="Sutton G."/>
        </authorList>
    </citation>
    <scope>NUCLEOTIDE SEQUENCE [LARGE SCALE GENOMIC DNA]</scope>
    <source>
        <strain>B4264</strain>
    </source>
</reference>
<protein>
    <recommendedName>
        <fullName evidence="1">Quinolinate synthase</fullName>
        <ecNumber evidence="1">2.5.1.72</ecNumber>
    </recommendedName>
</protein>